<comment type="function">
    <text evidence="1 2 3 6">Regulatory DnaK co-chaperone. Direct interaction between DnaK and DjlA is needed for the induction of the wcaABCDE operon, involved in the synthesis of a colanic acid polysaccharide capsule, possibly through activation of the RcsB/RcsC phosphotransfer signaling pathway. The colanic acid capsule may help the bacterium survive conditions outside the host.</text>
</comment>
<comment type="subunit">
    <text evidence="1 4">Homodimer.</text>
</comment>
<comment type="subcellular location">
    <subcellularLocation>
        <location evidence="1 2 5 6">Cell inner membrane</location>
        <topology evidence="1 2 5 6">Single-pass type III membrane protein</topology>
    </subcellularLocation>
</comment>
<comment type="domain">
    <text evidence="1 4">The transmembrane domain is a dimerization domain.</text>
</comment>
<protein>
    <recommendedName>
        <fullName evidence="1 9">Co-chaperone protein DjlA</fullName>
    </recommendedName>
    <alternativeName>
        <fullName evidence="9">DnaJ-like protein DjlA</fullName>
    </alternativeName>
</protein>
<feature type="chain" id="PRO_0000209424" description="Co-chaperone protein DjlA">
    <location>
        <begin position="1"/>
        <end position="271"/>
    </location>
</feature>
<feature type="topological domain" description="Periplasmic" evidence="1 10 11">
    <location>
        <begin position="1"/>
        <end position="6"/>
    </location>
</feature>
<feature type="transmembrane region" description="Helical" evidence="1">
    <location>
        <begin position="7"/>
        <end position="31"/>
    </location>
</feature>
<feature type="topological domain" description="Cytoplasmic" evidence="1 10 11">
    <location>
        <begin position="32"/>
        <end position="271"/>
    </location>
</feature>
<feature type="domain" description="J" evidence="1">
    <location>
        <begin position="205"/>
        <end position="271"/>
    </location>
</feature>
<feature type="mutagenesis site" description="Loss of activation of rcs." evidence="7">
    <original>L</original>
    <variation>R</variation>
    <location>
        <position position="15"/>
    </location>
</feature>
<feature type="mutagenesis site" description="Only partial activation of rcs." evidence="7">
    <original>M</original>
    <variation>R</variation>
    <location>
        <position position="16"/>
    </location>
</feature>
<feature type="mutagenesis site" description="Loss of activity." evidence="6">
    <original>H</original>
    <variation>Q</variation>
    <location>
        <position position="233"/>
    </location>
</feature>
<feature type="sequence conflict" description="In Ref. 4; AAT42473." evidence="9" ref="4">
    <original>Q</original>
    <variation>L</variation>
    <location>
        <position position="195"/>
    </location>
</feature>
<accession>P31680</accession>
<accession>Q6IU30</accession>
<dbReference type="EMBL" id="U00096">
    <property type="protein sequence ID" value="AAC73166.1"/>
    <property type="molecule type" value="Genomic_DNA"/>
</dbReference>
<dbReference type="EMBL" id="AP009048">
    <property type="protein sequence ID" value="BAB96623.1"/>
    <property type="molecule type" value="Genomic_DNA"/>
</dbReference>
<dbReference type="EMBL" id="AY625119">
    <property type="protein sequence ID" value="AAT42473.1"/>
    <property type="molecule type" value="Genomic_DNA"/>
</dbReference>
<dbReference type="PIR" id="G64726">
    <property type="entry name" value="G64726"/>
</dbReference>
<dbReference type="RefSeq" id="NP_414597.1">
    <property type="nucleotide sequence ID" value="NC_000913.3"/>
</dbReference>
<dbReference type="RefSeq" id="WP_001200579.1">
    <property type="nucleotide sequence ID" value="NZ_STEB01000010.1"/>
</dbReference>
<dbReference type="SMR" id="P31680"/>
<dbReference type="BioGRID" id="4261616">
    <property type="interactions" value="28"/>
</dbReference>
<dbReference type="FunCoup" id="P31680">
    <property type="interactions" value="107"/>
</dbReference>
<dbReference type="IntAct" id="P31680">
    <property type="interactions" value="7"/>
</dbReference>
<dbReference type="STRING" id="511145.b0055"/>
<dbReference type="jPOST" id="P31680"/>
<dbReference type="PaxDb" id="511145-b0055"/>
<dbReference type="EnsemblBacteria" id="AAC73166">
    <property type="protein sequence ID" value="AAC73166"/>
    <property type="gene ID" value="b0055"/>
</dbReference>
<dbReference type="GeneID" id="948992"/>
<dbReference type="KEGG" id="ecj:JW0054"/>
<dbReference type="KEGG" id="eco:b0055"/>
<dbReference type="KEGG" id="ecoc:C3026_00285"/>
<dbReference type="PATRIC" id="fig|1411691.4.peg.2228"/>
<dbReference type="EchoBASE" id="EB1530"/>
<dbReference type="eggNOG" id="COG1076">
    <property type="taxonomic scope" value="Bacteria"/>
</dbReference>
<dbReference type="HOGENOM" id="CLU_066221_1_0_6"/>
<dbReference type="InParanoid" id="P31680"/>
<dbReference type="OMA" id="MQYWGKL"/>
<dbReference type="OrthoDB" id="9782583at2"/>
<dbReference type="PhylomeDB" id="P31680"/>
<dbReference type="BioCyc" id="EcoCyc:EG11570-MONOMER"/>
<dbReference type="PRO" id="PR:P31680"/>
<dbReference type="Proteomes" id="UP000000625">
    <property type="component" value="Chromosome"/>
</dbReference>
<dbReference type="GO" id="GO:0016020">
    <property type="term" value="C:membrane"/>
    <property type="evidence" value="ECO:0000314"/>
    <property type="project" value="EcoCyc"/>
</dbReference>
<dbReference type="GO" id="GO:0005886">
    <property type="term" value="C:plasma membrane"/>
    <property type="evidence" value="ECO:0000314"/>
    <property type="project" value="EcoCyc"/>
</dbReference>
<dbReference type="GO" id="GO:0051087">
    <property type="term" value="F:protein-folding chaperone binding"/>
    <property type="evidence" value="ECO:0000315"/>
    <property type="project" value="EcoCyc"/>
</dbReference>
<dbReference type="CDD" id="cd06257">
    <property type="entry name" value="DnaJ"/>
    <property type="match status" value="1"/>
</dbReference>
<dbReference type="CDD" id="cd07316">
    <property type="entry name" value="terB_like_DjlA"/>
    <property type="match status" value="1"/>
</dbReference>
<dbReference type="FunFam" id="1.10.287.110:FF:000011">
    <property type="entry name" value="Co-chaperone protein DjlA"/>
    <property type="match status" value="1"/>
</dbReference>
<dbReference type="FunFam" id="1.10.3680.10:FF:000001">
    <property type="entry name" value="Co-chaperone protein DjlA"/>
    <property type="match status" value="1"/>
</dbReference>
<dbReference type="Gene3D" id="1.10.287.110">
    <property type="entry name" value="DnaJ domain"/>
    <property type="match status" value="1"/>
</dbReference>
<dbReference type="Gene3D" id="1.10.3680.10">
    <property type="entry name" value="TerB-like"/>
    <property type="match status" value="1"/>
</dbReference>
<dbReference type="HAMAP" id="MF_01153">
    <property type="entry name" value="DjlA"/>
    <property type="match status" value="1"/>
</dbReference>
<dbReference type="InterPro" id="IPR023749">
    <property type="entry name" value="DjlA"/>
</dbReference>
<dbReference type="InterPro" id="IPR050817">
    <property type="entry name" value="DjlA_DnaK_co-chaperone"/>
</dbReference>
<dbReference type="InterPro" id="IPR007791">
    <property type="entry name" value="DjlA_N"/>
</dbReference>
<dbReference type="InterPro" id="IPR001623">
    <property type="entry name" value="DnaJ_domain"/>
</dbReference>
<dbReference type="InterPro" id="IPR036869">
    <property type="entry name" value="J_dom_sf"/>
</dbReference>
<dbReference type="InterPro" id="IPR029024">
    <property type="entry name" value="TerB-like"/>
</dbReference>
<dbReference type="NCBIfam" id="NF006948">
    <property type="entry name" value="PRK09430.1"/>
    <property type="match status" value="1"/>
</dbReference>
<dbReference type="PANTHER" id="PTHR24074">
    <property type="entry name" value="CO-CHAPERONE PROTEIN DJLA"/>
    <property type="match status" value="1"/>
</dbReference>
<dbReference type="Pfam" id="PF00226">
    <property type="entry name" value="DnaJ"/>
    <property type="match status" value="1"/>
</dbReference>
<dbReference type="Pfam" id="PF05099">
    <property type="entry name" value="TerB"/>
    <property type="match status" value="1"/>
</dbReference>
<dbReference type="PRINTS" id="PR00625">
    <property type="entry name" value="JDOMAIN"/>
</dbReference>
<dbReference type="SMART" id="SM00271">
    <property type="entry name" value="DnaJ"/>
    <property type="match status" value="1"/>
</dbReference>
<dbReference type="SUPFAM" id="SSF46565">
    <property type="entry name" value="Chaperone J-domain"/>
    <property type="match status" value="1"/>
</dbReference>
<dbReference type="PROSITE" id="PS50076">
    <property type="entry name" value="DNAJ_2"/>
    <property type="match status" value="1"/>
</dbReference>
<organism>
    <name type="scientific">Escherichia coli (strain K12)</name>
    <dbReference type="NCBI Taxonomy" id="83333"/>
    <lineage>
        <taxon>Bacteria</taxon>
        <taxon>Pseudomonadati</taxon>
        <taxon>Pseudomonadota</taxon>
        <taxon>Gammaproteobacteria</taxon>
        <taxon>Enterobacterales</taxon>
        <taxon>Enterobacteriaceae</taxon>
        <taxon>Escherichia</taxon>
    </lineage>
</organism>
<sequence>MQYWGKIIGVAVALLMGGGFWGVVLGLLIGHMFDKARSRKMAWFANQRERQALFFATTFEVMGHLTKSKGRVTEADIHIASQLMDRMNLHGASRTAAQNAFRVGKSDNYPLREKMRQFRSVCFGRFDLIRMFLEIQIQAAFADGSLHPNERAVLYVIAEELGISRAQFDQFLRMMQGGAQFGGGYQQQTGGGNWQQAQRGPTLEDACNVLGVKPTDDATTIKRAYRKLMSEHHPDKLVAKGLPPEMMEMAKQKAQEIQQAYELIKQQKGFK</sequence>
<evidence type="ECO:0000255" key="1">
    <source>
        <dbReference type="HAMAP-Rule" id="MF_01153"/>
    </source>
</evidence>
<evidence type="ECO:0000269" key="2">
    <source>
    </source>
</evidence>
<evidence type="ECO:0000269" key="3">
    <source>
    </source>
</evidence>
<evidence type="ECO:0000269" key="4">
    <source>
    </source>
</evidence>
<evidence type="ECO:0000269" key="5">
    <source>
    </source>
</evidence>
<evidence type="ECO:0000269" key="6">
    <source>
    </source>
</evidence>
<evidence type="ECO:0000269" key="7">
    <source>
    </source>
</evidence>
<evidence type="ECO:0000303" key="8">
    <source>
    </source>
</evidence>
<evidence type="ECO:0000305" key="9"/>
<evidence type="ECO:0000305" key="10">
    <source>
    </source>
</evidence>
<evidence type="ECO:0000305" key="11">
    <source>
    </source>
</evidence>
<gene>
    <name evidence="1 8" type="primary">djlA</name>
    <name type="synonym">yabH</name>
    <name type="ordered locus">b0055</name>
    <name type="ordered locus">JW0054</name>
</gene>
<name>DJLA_ECOLI</name>
<keyword id="KW-0997">Cell inner membrane</keyword>
<keyword id="KW-1003">Cell membrane</keyword>
<keyword id="KW-0143">Chaperone</keyword>
<keyword id="KW-0472">Membrane</keyword>
<keyword id="KW-1185">Reference proteome</keyword>
<keyword id="KW-0812">Transmembrane</keyword>
<keyword id="KW-1133">Transmembrane helix</keyword>
<reference key="1">
    <citation type="journal article" date="1992" name="Nucleic Acids Res.">
        <title>Systematic sequencing of the Escherichia coli genome: analysis of the 0-2.4 min region.</title>
        <authorList>
            <person name="Yura T."/>
            <person name="Mori H."/>
            <person name="Nagai H."/>
            <person name="Nagata T."/>
            <person name="Ishihama A."/>
            <person name="Fujita N."/>
            <person name="Isono K."/>
            <person name="Mizobuchi K."/>
            <person name="Nakata A."/>
        </authorList>
    </citation>
    <scope>NUCLEOTIDE SEQUENCE [LARGE SCALE GENOMIC DNA]</scope>
    <source>
        <strain>K12</strain>
    </source>
</reference>
<reference key="2">
    <citation type="journal article" date="1997" name="Science">
        <title>The complete genome sequence of Escherichia coli K-12.</title>
        <authorList>
            <person name="Blattner F.R."/>
            <person name="Plunkett G. III"/>
            <person name="Bloch C.A."/>
            <person name="Perna N.T."/>
            <person name="Burland V."/>
            <person name="Riley M."/>
            <person name="Collado-Vides J."/>
            <person name="Glasner J.D."/>
            <person name="Rode C.K."/>
            <person name="Mayhew G.F."/>
            <person name="Gregor J."/>
            <person name="Davis N.W."/>
            <person name="Kirkpatrick H.A."/>
            <person name="Goeden M.A."/>
            <person name="Rose D.J."/>
            <person name="Mau B."/>
            <person name="Shao Y."/>
        </authorList>
    </citation>
    <scope>NUCLEOTIDE SEQUENCE [LARGE SCALE GENOMIC DNA]</scope>
    <source>
        <strain>K12 / MG1655 / ATCC 47076</strain>
    </source>
</reference>
<reference key="3">
    <citation type="journal article" date="2006" name="Mol. Syst. Biol.">
        <title>Highly accurate genome sequences of Escherichia coli K-12 strains MG1655 and W3110.</title>
        <authorList>
            <person name="Hayashi K."/>
            <person name="Morooka N."/>
            <person name="Yamamoto Y."/>
            <person name="Fujita K."/>
            <person name="Isono K."/>
            <person name="Choi S."/>
            <person name="Ohtsubo E."/>
            <person name="Baba T."/>
            <person name="Wanner B.L."/>
            <person name="Mori H."/>
            <person name="Horiuchi T."/>
        </authorList>
    </citation>
    <scope>NUCLEOTIDE SEQUENCE [LARGE SCALE GENOMIC DNA]</scope>
    <source>
        <strain>K12 / W3110 / ATCC 27325 / DSM 5911</strain>
    </source>
</reference>
<reference key="4">
    <citation type="journal article" date="2003" name="J. Mol. Evol.">
        <title>Rates of DNA sequence evolution in experimental populations of Escherichia coli during 20,000 generations.</title>
        <authorList>
            <person name="Lenski R.E."/>
            <person name="Winkworth C.L."/>
            <person name="Riley M.A."/>
        </authorList>
    </citation>
    <scope>NUCLEOTIDE SEQUENCE [GENOMIC DNA] OF 55-219</scope>
    <source>
        <strain>B</strain>
    </source>
</reference>
<reference key="5">
    <citation type="journal article" date="1996" name="Mol. Microbiol.">
        <title>A novel DnaJ-like protein in Escherichia coli inserts into the cytoplasmic membrane with a type III topology.</title>
        <authorList>
            <person name="Clarke D.J."/>
            <person name="Jacq A."/>
            <person name="Holland I.B."/>
        </authorList>
    </citation>
    <scope>NUCLEOTIDE SEQUENCE [GENOMIC DNA] OF 1-45</scope>
    <scope>SUBCELLULAR LOCATION</scope>
    <scope>TOPOLOGY</scope>
</reference>
<reference key="6">
    <citation type="journal article" date="1997" name="Mol. Microbiol.">
        <title>Positive control of the two-component RcsC/B signal transduction network by DjIA: a member of the DnaJ family of molecular chaperones in Escherichia coli.</title>
        <authorList>
            <person name="Kelley W.L."/>
            <person name="Georgopoulos C."/>
        </authorList>
    </citation>
    <scope>FUNCTION</scope>
    <scope>SUBCELLULAR LOCATION</scope>
    <scope>TOPOLOGY</scope>
    <scope>MUTAGENESIS OF HIS-233</scope>
</reference>
<reference key="7">
    <citation type="journal article" date="2001" name="Biosci. Biotechnol. Biochem.">
        <title>Characterization of the RcsC-&gt;YojN-&gt;RcsB phosphorelay signaling pathway involved in capsular synthesis in Escherichia coli.</title>
        <authorList>
            <person name="Chen M.H."/>
            <person name="Takeda S."/>
            <person name="Yamada H."/>
            <person name="Ishii Y."/>
            <person name="Yamashino T."/>
            <person name="Mizuno T."/>
        </authorList>
    </citation>
    <scope>FUNCTION IN THE REGULATION OF THE RCS SYSTEM</scope>
</reference>
<reference key="8">
    <citation type="journal article" date="2001" name="J. Biol. Chem.">
        <title>DjlA is a third DnaK co-chaperone of Escherichia coli, and DjlA-mediated induction of colanic acid capsule requires DjlA-DnaK interaction.</title>
        <authorList>
            <person name="Genevaux P."/>
            <person name="Wawrzynow A."/>
            <person name="Zylicz M."/>
            <person name="Georgopoulos C."/>
            <person name="Kelley W.L."/>
        </authorList>
    </citation>
    <scope>FUNCTION</scope>
    <scope>SUBCELLULAR LOCATION</scope>
</reference>
<reference key="9">
    <citation type="journal article" date="2003" name="Mol. Genet. Genomics">
        <title>The transmembrane domain of the DnaJ-like protein DjlA is a dimerisation domain.</title>
        <authorList>
            <person name="Toutain C.M."/>
            <person name="Clarke D.J."/>
            <person name="Leeds J.A."/>
            <person name="Kuhn J."/>
            <person name="Beckwith J."/>
            <person name="Holland I.B."/>
            <person name="Jacq A."/>
        </authorList>
    </citation>
    <scope>TRANSMEMBRANE DOMAIN</scope>
    <scope>SUBUNIT</scope>
</reference>
<reference key="10">
    <citation type="journal article" date="1997" name="Mol. Microbiol.">
        <title>Point mutations in the transmembrane domain of DjlA, a membrane-linked DnaJ-like protein, abolish its function in promoting colanic acid production via the Rcs signal transduction pathway.</title>
        <authorList>
            <person name="Clarke D.J."/>
            <person name="Holland I.B."/>
            <person name="Jacq A."/>
        </authorList>
    </citation>
    <scope>MUTAGENESIS</scope>
</reference>
<proteinExistence type="evidence at protein level"/>